<evidence type="ECO:0000255" key="1">
    <source>
        <dbReference type="HAMAP-Rule" id="MF_02006"/>
    </source>
</evidence>
<gene>
    <name evidence="1" type="primary">tyrS</name>
    <name type="ordered locus">Erum0620</name>
    <name type="ordered locus">ERWE_CDS_00530</name>
</gene>
<proteinExistence type="inferred from homology"/>
<name>SYY_EHRRW</name>
<dbReference type="EC" id="6.1.1.1" evidence="1"/>
<dbReference type="EMBL" id="CR925678">
    <property type="protein sequence ID" value="CAI26547.1"/>
    <property type="molecule type" value="Genomic_DNA"/>
</dbReference>
<dbReference type="EMBL" id="CR767821">
    <property type="protein sequence ID" value="CAH57773.1"/>
    <property type="molecule type" value="Genomic_DNA"/>
</dbReference>
<dbReference type="RefSeq" id="WP_011154745.1">
    <property type="nucleotide sequence ID" value="NC_005295.2"/>
</dbReference>
<dbReference type="SMR" id="Q5HCB5"/>
<dbReference type="GeneID" id="33058342"/>
<dbReference type="KEGG" id="eru:Erum0620"/>
<dbReference type="KEGG" id="erw:ERWE_CDS_00530"/>
<dbReference type="eggNOG" id="COG0162">
    <property type="taxonomic scope" value="Bacteria"/>
</dbReference>
<dbReference type="HOGENOM" id="CLU_024003_0_3_5"/>
<dbReference type="Proteomes" id="UP000001021">
    <property type="component" value="Chromosome"/>
</dbReference>
<dbReference type="GO" id="GO:0005829">
    <property type="term" value="C:cytosol"/>
    <property type="evidence" value="ECO:0007669"/>
    <property type="project" value="TreeGrafter"/>
</dbReference>
<dbReference type="GO" id="GO:0005524">
    <property type="term" value="F:ATP binding"/>
    <property type="evidence" value="ECO:0007669"/>
    <property type="project" value="UniProtKB-UniRule"/>
</dbReference>
<dbReference type="GO" id="GO:0003723">
    <property type="term" value="F:RNA binding"/>
    <property type="evidence" value="ECO:0007669"/>
    <property type="project" value="UniProtKB-KW"/>
</dbReference>
<dbReference type="GO" id="GO:0004831">
    <property type="term" value="F:tyrosine-tRNA ligase activity"/>
    <property type="evidence" value="ECO:0007669"/>
    <property type="project" value="UniProtKB-UniRule"/>
</dbReference>
<dbReference type="GO" id="GO:0006437">
    <property type="term" value="P:tyrosyl-tRNA aminoacylation"/>
    <property type="evidence" value="ECO:0007669"/>
    <property type="project" value="UniProtKB-UniRule"/>
</dbReference>
<dbReference type="CDD" id="cd00165">
    <property type="entry name" value="S4"/>
    <property type="match status" value="1"/>
</dbReference>
<dbReference type="CDD" id="cd00805">
    <property type="entry name" value="TyrRS_core"/>
    <property type="match status" value="1"/>
</dbReference>
<dbReference type="FunFam" id="1.10.240.10:FF:000001">
    <property type="entry name" value="Tyrosine--tRNA ligase"/>
    <property type="match status" value="1"/>
</dbReference>
<dbReference type="Gene3D" id="3.40.50.620">
    <property type="entry name" value="HUPs"/>
    <property type="match status" value="1"/>
</dbReference>
<dbReference type="Gene3D" id="3.10.290.10">
    <property type="entry name" value="RNA-binding S4 domain"/>
    <property type="match status" value="1"/>
</dbReference>
<dbReference type="Gene3D" id="1.10.240.10">
    <property type="entry name" value="Tyrosyl-Transfer RNA Synthetase"/>
    <property type="match status" value="1"/>
</dbReference>
<dbReference type="HAMAP" id="MF_02006">
    <property type="entry name" value="Tyr_tRNA_synth_type1"/>
    <property type="match status" value="1"/>
</dbReference>
<dbReference type="InterPro" id="IPR002305">
    <property type="entry name" value="aa-tRNA-synth_Ic"/>
</dbReference>
<dbReference type="InterPro" id="IPR014729">
    <property type="entry name" value="Rossmann-like_a/b/a_fold"/>
</dbReference>
<dbReference type="InterPro" id="IPR036986">
    <property type="entry name" value="S4_RNA-bd_sf"/>
</dbReference>
<dbReference type="InterPro" id="IPR002307">
    <property type="entry name" value="Tyr-tRNA-ligase"/>
</dbReference>
<dbReference type="InterPro" id="IPR024088">
    <property type="entry name" value="Tyr-tRNA-ligase_bac-type"/>
</dbReference>
<dbReference type="InterPro" id="IPR024107">
    <property type="entry name" value="Tyr-tRNA-ligase_bac_1"/>
</dbReference>
<dbReference type="NCBIfam" id="TIGR00234">
    <property type="entry name" value="tyrS"/>
    <property type="match status" value="1"/>
</dbReference>
<dbReference type="PANTHER" id="PTHR11766:SF0">
    <property type="entry name" value="TYROSINE--TRNA LIGASE, MITOCHONDRIAL"/>
    <property type="match status" value="1"/>
</dbReference>
<dbReference type="PANTHER" id="PTHR11766">
    <property type="entry name" value="TYROSYL-TRNA SYNTHETASE"/>
    <property type="match status" value="1"/>
</dbReference>
<dbReference type="Pfam" id="PF00579">
    <property type="entry name" value="tRNA-synt_1b"/>
    <property type="match status" value="1"/>
</dbReference>
<dbReference type="PRINTS" id="PR01040">
    <property type="entry name" value="TRNASYNTHTYR"/>
</dbReference>
<dbReference type="SUPFAM" id="SSF55174">
    <property type="entry name" value="Alpha-L RNA-binding motif"/>
    <property type="match status" value="1"/>
</dbReference>
<dbReference type="SUPFAM" id="SSF52374">
    <property type="entry name" value="Nucleotidylyl transferase"/>
    <property type="match status" value="1"/>
</dbReference>
<dbReference type="PROSITE" id="PS50889">
    <property type="entry name" value="S4"/>
    <property type="match status" value="1"/>
</dbReference>
<organism>
    <name type="scientific">Ehrlichia ruminantium (strain Welgevonden)</name>
    <dbReference type="NCBI Taxonomy" id="254945"/>
    <lineage>
        <taxon>Bacteria</taxon>
        <taxon>Pseudomonadati</taxon>
        <taxon>Pseudomonadota</taxon>
        <taxon>Alphaproteobacteria</taxon>
        <taxon>Rickettsiales</taxon>
        <taxon>Anaplasmataceae</taxon>
        <taxon>Ehrlichia</taxon>
    </lineage>
</organism>
<feature type="chain" id="PRO_0000234707" description="Tyrosine--tRNA ligase">
    <location>
        <begin position="1"/>
        <end position="418"/>
    </location>
</feature>
<feature type="domain" description="S4 RNA-binding" evidence="1">
    <location>
        <begin position="348"/>
        <end position="413"/>
    </location>
</feature>
<feature type="short sequence motif" description="'HIGH' region">
    <location>
        <begin position="43"/>
        <end position="52"/>
    </location>
</feature>
<feature type="short sequence motif" description="'KMSKS' region">
    <location>
        <begin position="235"/>
        <end position="239"/>
    </location>
</feature>
<feature type="binding site" evidence="1">
    <location>
        <position position="38"/>
    </location>
    <ligand>
        <name>L-tyrosine</name>
        <dbReference type="ChEBI" id="CHEBI:58315"/>
    </ligand>
</feature>
<feature type="binding site" evidence="1">
    <location>
        <position position="175"/>
    </location>
    <ligand>
        <name>L-tyrosine</name>
        <dbReference type="ChEBI" id="CHEBI:58315"/>
    </ligand>
</feature>
<feature type="binding site" evidence="1">
    <location>
        <position position="179"/>
    </location>
    <ligand>
        <name>L-tyrosine</name>
        <dbReference type="ChEBI" id="CHEBI:58315"/>
    </ligand>
</feature>
<feature type="binding site" evidence="1">
    <location>
        <position position="238"/>
    </location>
    <ligand>
        <name>ATP</name>
        <dbReference type="ChEBI" id="CHEBI:30616"/>
    </ligand>
</feature>
<reference key="1">
    <citation type="journal article" date="2005" name="Proc. Natl. Acad. Sci. U.S.A.">
        <title>The genome of the heartwater agent Ehrlichia ruminantium contains multiple tandem repeats of actively variable copy number.</title>
        <authorList>
            <person name="Collins N.E."/>
            <person name="Liebenberg J."/>
            <person name="de Villiers E.P."/>
            <person name="Brayton K.A."/>
            <person name="Louw E."/>
            <person name="Pretorius A."/>
            <person name="Faber F.E."/>
            <person name="van Heerden H."/>
            <person name="Josemans A."/>
            <person name="van Kleef M."/>
            <person name="Steyn H.C."/>
            <person name="van Strijp M.F."/>
            <person name="Zweygarth E."/>
            <person name="Jongejan F."/>
            <person name="Maillard J.C."/>
            <person name="Berthier D."/>
            <person name="Botha M."/>
            <person name="Joubert F."/>
            <person name="Corton C.H."/>
            <person name="Thomson N.R."/>
            <person name="Allsopp M.T."/>
            <person name="Allsopp B.A."/>
        </authorList>
    </citation>
    <scope>NUCLEOTIDE SEQUENCE [LARGE SCALE GENOMIC DNA]</scope>
    <source>
        <strain>Welgevonden</strain>
    </source>
</reference>
<reference key="2">
    <citation type="journal article" date="2006" name="J. Bacteriol.">
        <title>Comparative genomic analysis of three strains of Ehrlichia ruminantium reveals an active process of genome size plasticity.</title>
        <authorList>
            <person name="Frutos R."/>
            <person name="Viari A."/>
            <person name="Ferraz C."/>
            <person name="Morgat A."/>
            <person name="Eychenie S."/>
            <person name="Kandassamy Y."/>
            <person name="Chantal I."/>
            <person name="Bensaid A."/>
            <person name="Coissac E."/>
            <person name="Vachiery N."/>
            <person name="Demaille J."/>
            <person name="Martinez D."/>
        </authorList>
    </citation>
    <scope>NUCLEOTIDE SEQUENCE [LARGE SCALE GENOMIC DNA]</scope>
    <source>
        <strain>Welgevonden</strain>
    </source>
</reference>
<comment type="function">
    <text evidence="1">Catalyzes the attachment of tyrosine to tRNA(Tyr) in a two-step reaction: tyrosine is first activated by ATP to form Tyr-AMP and then transferred to the acceptor end of tRNA(Tyr).</text>
</comment>
<comment type="catalytic activity">
    <reaction evidence="1">
        <text>tRNA(Tyr) + L-tyrosine + ATP = L-tyrosyl-tRNA(Tyr) + AMP + diphosphate + H(+)</text>
        <dbReference type="Rhea" id="RHEA:10220"/>
        <dbReference type="Rhea" id="RHEA-COMP:9706"/>
        <dbReference type="Rhea" id="RHEA-COMP:9707"/>
        <dbReference type="ChEBI" id="CHEBI:15378"/>
        <dbReference type="ChEBI" id="CHEBI:30616"/>
        <dbReference type="ChEBI" id="CHEBI:33019"/>
        <dbReference type="ChEBI" id="CHEBI:58315"/>
        <dbReference type="ChEBI" id="CHEBI:78442"/>
        <dbReference type="ChEBI" id="CHEBI:78536"/>
        <dbReference type="ChEBI" id="CHEBI:456215"/>
        <dbReference type="EC" id="6.1.1.1"/>
    </reaction>
</comment>
<comment type="subunit">
    <text evidence="1">Homodimer.</text>
</comment>
<comment type="subcellular location">
    <subcellularLocation>
        <location evidence="1">Cytoplasm</location>
    </subcellularLocation>
</comment>
<comment type="similarity">
    <text evidence="1">Belongs to the class-I aminoacyl-tRNA synthetase family. TyrS type 1 subfamily.</text>
</comment>
<sequence>MKLKSDFLGLLYSRGYFNQCTDLAELDQLMSKECVIAYIGFDCTARSLHIGSLMQIMILRYLQKCGHKPIVLLGNGTTKIGDPSGKDKSRTLLSSSDIQENTLGIRKVLEKFIVCGGGVSDALLVYNAEWLDKLNYIDFLRNIGRHFSVNNMLTFDSVKLRLEREQNLSFLEFNYMLLQAYDFIELNQRYNCLLQIGGSDQWGNIVNGVELGRKLKLPQLFGLTTHLLLTSTGEKMGKTADGAIWLDGEMYSPADYWQYFRNVKDEDVGRFLRLFTELPLTEIEKLENLKGYEINEAKKILATEATRICHGEKIAQDIAYDALKVFECNDHSGLPVFYVCKSEIELGLSVVKLLQVSGMEKSNSSAKRLINDKGCKINDIIILDVNYKLSLQDFCGMSYIKLSCGKKRHLKVVLESDL</sequence>
<keyword id="KW-0030">Aminoacyl-tRNA synthetase</keyword>
<keyword id="KW-0067">ATP-binding</keyword>
<keyword id="KW-0963">Cytoplasm</keyword>
<keyword id="KW-0436">Ligase</keyword>
<keyword id="KW-0547">Nucleotide-binding</keyword>
<keyword id="KW-0648">Protein biosynthesis</keyword>
<keyword id="KW-0694">RNA-binding</keyword>
<accession>Q5HCB5</accession>
<accession>Q5FCL4</accession>
<protein>
    <recommendedName>
        <fullName evidence="1">Tyrosine--tRNA ligase</fullName>
        <ecNumber evidence="1">6.1.1.1</ecNumber>
    </recommendedName>
    <alternativeName>
        <fullName evidence="1">Tyrosyl-tRNA synthetase</fullName>
        <shortName evidence="1">TyrRS</shortName>
    </alternativeName>
</protein>